<organism>
    <name type="scientific">Sodalis glossinidius (strain morsitans)</name>
    <dbReference type="NCBI Taxonomy" id="343509"/>
    <lineage>
        <taxon>Bacteria</taxon>
        <taxon>Pseudomonadati</taxon>
        <taxon>Pseudomonadota</taxon>
        <taxon>Gammaproteobacteria</taxon>
        <taxon>Enterobacterales</taxon>
        <taxon>Bruguierivoracaceae</taxon>
        <taxon>Sodalis</taxon>
    </lineage>
</organism>
<sequence length="160" mass="18415">MTKKKEHKPGSATIAQNKRARHEYFIEQEFEAGLSLQGWEVKSLRAGKANIGDSYVLLKDGEAYLFGATFQPLTVASSHVVCDPMRTRKLLLNKRELDSLFGRVNREGYTVVALSLYWKNAWVKVKIGVAKGKKEYDKRTDIKEREWQLDKSRIMKHASR</sequence>
<dbReference type="EMBL" id="AP008232">
    <property type="protein sequence ID" value="BAE75079.1"/>
    <property type="molecule type" value="Genomic_DNA"/>
</dbReference>
<dbReference type="RefSeq" id="WP_011411628.1">
    <property type="nucleotide sequence ID" value="NC_007712.1"/>
</dbReference>
<dbReference type="SMR" id="Q2NRZ6"/>
<dbReference type="STRING" id="343509.SG1804"/>
<dbReference type="KEGG" id="sgl:SG1804"/>
<dbReference type="eggNOG" id="COG0691">
    <property type="taxonomic scope" value="Bacteria"/>
</dbReference>
<dbReference type="HOGENOM" id="CLU_108953_3_0_6"/>
<dbReference type="OrthoDB" id="9805462at2"/>
<dbReference type="BioCyc" id="SGLO343509:SGP1_RS16310-MONOMER"/>
<dbReference type="Proteomes" id="UP000001932">
    <property type="component" value="Chromosome"/>
</dbReference>
<dbReference type="GO" id="GO:0005829">
    <property type="term" value="C:cytosol"/>
    <property type="evidence" value="ECO:0007669"/>
    <property type="project" value="TreeGrafter"/>
</dbReference>
<dbReference type="GO" id="GO:0003723">
    <property type="term" value="F:RNA binding"/>
    <property type="evidence" value="ECO:0007669"/>
    <property type="project" value="UniProtKB-UniRule"/>
</dbReference>
<dbReference type="GO" id="GO:0070929">
    <property type="term" value="P:trans-translation"/>
    <property type="evidence" value="ECO:0007669"/>
    <property type="project" value="UniProtKB-UniRule"/>
</dbReference>
<dbReference type="CDD" id="cd09294">
    <property type="entry name" value="SmpB"/>
    <property type="match status" value="1"/>
</dbReference>
<dbReference type="Gene3D" id="2.40.280.10">
    <property type="match status" value="1"/>
</dbReference>
<dbReference type="HAMAP" id="MF_00023">
    <property type="entry name" value="SmpB"/>
    <property type="match status" value="1"/>
</dbReference>
<dbReference type="InterPro" id="IPR023620">
    <property type="entry name" value="SmpB"/>
</dbReference>
<dbReference type="InterPro" id="IPR000037">
    <property type="entry name" value="SsrA-bd_prot"/>
</dbReference>
<dbReference type="InterPro" id="IPR020081">
    <property type="entry name" value="SsrA-bd_prot_CS"/>
</dbReference>
<dbReference type="NCBIfam" id="NF003843">
    <property type="entry name" value="PRK05422.1"/>
    <property type="match status" value="1"/>
</dbReference>
<dbReference type="NCBIfam" id="TIGR00086">
    <property type="entry name" value="smpB"/>
    <property type="match status" value="1"/>
</dbReference>
<dbReference type="PANTHER" id="PTHR30308:SF2">
    <property type="entry name" value="SSRA-BINDING PROTEIN"/>
    <property type="match status" value="1"/>
</dbReference>
<dbReference type="PANTHER" id="PTHR30308">
    <property type="entry name" value="TMRNA-BINDING COMPONENT OF TRANS-TRANSLATION TAGGING COMPLEX"/>
    <property type="match status" value="1"/>
</dbReference>
<dbReference type="Pfam" id="PF01668">
    <property type="entry name" value="SmpB"/>
    <property type="match status" value="1"/>
</dbReference>
<dbReference type="SUPFAM" id="SSF74982">
    <property type="entry name" value="Small protein B (SmpB)"/>
    <property type="match status" value="1"/>
</dbReference>
<dbReference type="PROSITE" id="PS01317">
    <property type="entry name" value="SSRP"/>
    <property type="match status" value="1"/>
</dbReference>
<comment type="function">
    <text evidence="1">Required for rescue of stalled ribosomes mediated by trans-translation. Binds to transfer-messenger RNA (tmRNA), required for stable association of tmRNA with ribosomes. tmRNA and SmpB together mimic tRNA shape, replacing the anticodon stem-loop with SmpB. tmRNA is encoded by the ssrA gene; the 2 termini fold to resemble tRNA(Ala) and it encodes a 'tag peptide', a short internal open reading frame. During trans-translation Ala-aminoacylated tmRNA acts like a tRNA, entering the A-site of stalled ribosomes, displacing the stalled mRNA. The ribosome then switches to translate the ORF on the tmRNA; the nascent peptide is terminated with the 'tag peptide' encoded by the tmRNA and targeted for degradation. The ribosome is freed to recommence translation, which seems to be the essential function of trans-translation.</text>
</comment>
<comment type="subcellular location">
    <subcellularLocation>
        <location evidence="1">Cytoplasm</location>
    </subcellularLocation>
    <text evidence="1">The tmRNA-SmpB complex associates with stalled 70S ribosomes.</text>
</comment>
<comment type="similarity">
    <text evidence="1">Belongs to the SmpB family.</text>
</comment>
<protein>
    <recommendedName>
        <fullName evidence="1">SsrA-binding protein</fullName>
    </recommendedName>
    <alternativeName>
        <fullName evidence="1">Small protein B</fullName>
    </alternativeName>
</protein>
<accession>Q2NRZ6</accession>
<name>SSRP_SODGM</name>
<gene>
    <name evidence="1" type="primary">smpB</name>
    <name type="ordered locus">SG1804</name>
</gene>
<evidence type="ECO:0000255" key="1">
    <source>
        <dbReference type="HAMAP-Rule" id="MF_00023"/>
    </source>
</evidence>
<keyword id="KW-0963">Cytoplasm</keyword>
<keyword id="KW-0694">RNA-binding</keyword>
<proteinExistence type="inferred from homology"/>
<reference key="1">
    <citation type="journal article" date="2006" name="Genome Res.">
        <title>Massive genome erosion and functional adaptations provide insights into the symbiotic lifestyle of Sodalis glossinidius in the tsetse host.</title>
        <authorList>
            <person name="Toh H."/>
            <person name="Weiss B.L."/>
            <person name="Perkin S.A.H."/>
            <person name="Yamashita A."/>
            <person name="Oshima K."/>
            <person name="Hattori M."/>
            <person name="Aksoy S."/>
        </authorList>
    </citation>
    <scope>NUCLEOTIDE SEQUENCE [LARGE SCALE GENOMIC DNA]</scope>
    <source>
        <strain>morsitans</strain>
    </source>
</reference>
<feature type="chain" id="PRO_1000002152" description="SsrA-binding protein">
    <location>
        <begin position="1"/>
        <end position="160"/>
    </location>
</feature>